<name>SYGA_XANCB</name>
<accession>B0RYX4</accession>
<evidence type="ECO:0000255" key="1">
    <source>
        <dbReference type="HAMAP-Rule" id="MF_00254"/>
    </source>
</evidence>
<reference key="1">
    <citation type="journal article" date="2008" name="J. Biotechnol.">
        <title>The genome of Xanthomonas campestris pv. campestris B100 and its use for the reconstruction of metabolic pathways involved in xanthan biosynthesis.</title>
        <authorList>
            <person name="Vorhoelter F.-J."/>
            <person name="Schneiker S."/>
            <person name="Goesmann A."/>
            <person name="Krause L."/>
            <person name="Bekel T."/>
            <person name="Kaiser O."/>
            <person name="Linke B."/>
            <person name="Patschkowski T."/>
            <person name="Rueckert C."/>
            <person name="Schmid J."/>
            <person name="Sidhu V.K."/>
            <person name="Sieber V."/>
            <person name="Tauch A."/>
            <person name="Watt S.A."/>
            <person name="Weisshaar B."/>
            <person name="Becker A."/>
            <person name="Niehaus K."/>
            <person name="Puehler A."/>
        </authorList>
    </citation>
    <scope>NUCLEOTIDE SEQUENCE [LARGE SCALE GENOMIC DNA]</scope>
    <source>
        <strain>B100</strain>
    </source>
</reference>
<organism>
    <name type="scientific">Xanthomonas campestris pv. campestris (strain B100)</name>
    <dbReference type="NCBI Taxonomy" id="509169"/>
    <lineage>
        <taxon>Bacteria</taxon>
        <taxon>Pseudomonadati</taxon>
        <taxon>Pseudomonadota</taxon>
        <taxon>Gammaproteobacteria</taxon>
        <taxon>Lysobacterales</taxon>
        <taxon>Lysobacteraceae</taxon>
        <taxon>Xanthomonas</taxon>
    </lineage>
</organism>
<proteinExistence type="inferred from homology"/>
<protein>
    <recommendedName>
        <fullName evidence="1">Glycine--tRNA ligase alpha subunit</fullName>
        <ecNumber evidence="1">6.1.1.14</ecNumber>
    </recommendedName>
    <alternativeName>
        <fullName evidence="1">Glycyl-tRNA synthetase alpha subunit</fullName>
        <shortName evidence="1">GlyRS</shortName>
    </alternativeName>
</protein>
<keyword id="KW-0030">Aminoacyl-tRNA synthetase</keyword>
<keyword id="KW-0067">ATP-binding</keyword>
<keyword id="KW-0963">Cytoplasm</keyword>
<keyword id="KW-0436">Ligase</keyword>
<keyword id="KW-0547">Nucleotide-binding</keyword>
<keyword id="KW-0648">Protein biosynthesis</keyword>
<sequence>MSDSRRVPITFQGLIQTLNQYWAEQGCVLIQPLDLEVGAGTFHPATFLRALGPEPWNAAYVQPSRRPTDGRYGENPNRLQRYYQYQVAMKPNPDNIQDLYLGSLKALGIDPLVHDLRFVEDNWESPTLGAWGLGWEVWLNGMEVTQFTYFQQAGGLECKPVLGEITYGLERLCMYLQSCDNVYDLVWTYGPDGTPVTYGDVYHQNEVEQSAYNFEHANVEELFHRFDACEAEAKHLVEVGLPLPAYEQVTKASHAFNLLDARRAISVTERQRYILRVRALAQGVAQAYYAQREKLGFPGVKK</sequence>
<gene>
    <name evidence="1" type="primary">glyQ</name>
    <name type="ordered locus">xcc-b100_4290</name>
</gene>
<comment type="catalytic activity">
    <reaction evidence="1">
        <text>tRNA(Gly) + glycine + ATP = glycyl-tRNA(Gly) + AMP + diphosphate</text>
        <dbReference type="Rhea" id="RHEA:16013"/>
        <dbReference type="Rhea" id="RHEA-COMP:9664"/>
        <dbReference type="Rhea" id="RHEA-COMP:9683"/>
        <dbReference type="ChEBI" id="CHEBI:30616"/>
        <dbReference type="ChEBI" id="CHEBI:33019"/>
        <dbReference type="ChEBI" id="CHEBI:57305"/>
        <dbReference type="ChEBI" id="CHEBI:78442"/>
        <dbReference type="ChEBI" id="CHEBI:78522"/>
        <dbReference type="ChEBI" id="CHEBI:456215"/>
        <dbReference type="EC" id="6.1.1.14"/>
    </reaction>
</comment>
<comment type="subunit">
    <text evidence="1">Tetramer of two alpha and two beta subunits.</text>
</comment>
<comment type="subcellular location">
    <subcellularLocation>
        <location evidence="1">Cytoplasm</location>
    </subcellularLocation>
</comment>
<comment type="similarity">
    <text evidence="1">Belongs to the class-II aminoacyl-tRNA synthetase family.</text>
</comment>
<feature type="chain" id="PRO_1000101245" description="Glycine--tRNA ligase alpha subunit">
    <location>
        <begin position="1"/>
        <end position="302"/>
    </location>
</feature>
<dbReference type="EC" id="6.1.1.14" evidence="1"/>
<dbReference type="EMBL" id="AM920689">
    <property type="protein sequence ID" value="CAP53660.1"/>
    <property type="molecule type" value="Genomic_DNA"/>
</dbReference>
<dbReference type="SMR" id="B0RYX4"/>
<dbReference type="KEGG" id="xca:xcc-b100_4290"/>
<dbReference type="HOGENOM" id="CLU_057066_1_0_6"/>
<dbReference type="Proteomes" id="UP000001188">
    <property type="component" value="Chromosome"/>
</dbReference>
<dbReference type="GO" id="GO:0005829">
    <property type="term" value="C:cytosol"/>
    <property type="evidence" value="ECO:0007669"/>
    <property type="project" value="TreeGrafter"/>
</dbReference>
<dbReference type="GO" id="GO:0005524">
    <property type="term" value="F:ATP binding"/>
    <property type="evidence" value="ECO:0007669"/>
    <property type="project" value="UniProtKB-UniRule"/>
</dbReference>
<dbReference type="GO" id="GO:0004820">
    <property type="term" value="F:glycine-tRNA ligase activity"/>
    <property type="evidence" value="ECO:0007669"/>
    <property type="project" value="UniProtKB-UniRule"/>
</dbReference>
<dbReference type="GO" id="GO:0006426">
    <property type="term" value="P:glycyl-tRNA aminoacylation"/>
    <property type="evidence" value="ECO:0007669"/>
    <property type="project" value="UniProtKB-UniRule"/>
</dbReference>
<dbReference type="CDD" id="cd00733">
    <property type="entry name" value="GlyRS_alpha_core"/>
    <property type="match status" value="1"/>
</dbReference>
<dbReference type="FunFam" id="3.30.930.10:FF:000006">
    <property type="entry name" value="Glycine--tRNA ligase alpha subunit"/>
    <property type="match status" value="1"/>
</dbReference>
<dbReference type="Gene3D" id="3.30.930.10">
    <property type="entry name" value="Bira Bifunctional Protein, Domain 2"/>
    <property type="match status" value="1"/>
</dbReference>
<dbReference type="Gene3D" id="1.20.58.180">
    <property type="entry name" value="Class II aaRS and biotin synthetases, domain 2"/>
    <property type="match status" value="1"/>
</dbReference>
<dbReference type="HAMAP" id="MF_00254">
    <property type="entry name" value="Gly_tRNA_synth_alpha"/>
    <property type="match status" value="1"/>
</dbReference>
<dbReference type="InterPro" id="IPR045864">
    <property type="entry name" value="aa-tRNA-synth_II/BPL/LPL"/>
</dbReference>
<dbReference type="InterPro" id="IPR006194">
    <property type="entry name" value="Gly-tRNA-synth_heterodimer"/>
</dbReference>
<dbReference type="InterPro" id="IPR002310">
    <property type="entry name" value="Gly-tRNA_ligase_asu"/>
</dbReference>
<dbReference type="NCBIfam" id="TIGR00388">
    <property type="entry name" value="glyQ"/>
    <property type="match status" value="1"/>
</dbReference>
<dbReference type="NCBIfam" id="NF006827">
    <property type="entry name" value="PRK09348.1"/>
    <property type="match status" value="1"/>
</dbReference>
<dbReference type="PANTHER" id="PTHR30075:SF2">
    <property type="entry name" value="GLYCINE--TRNA LIGASE, CHLOROPLASTIC_MITOCHONDRIAL 2"/>
    <property type="match status" value="1"/>
</dbReference>
<dbReference type="PANTHER" id="PTHR30075">
    <property type="entry name" value="GLYCYL-TRNA SYNTHETASE"/>
    <property type="match status" value="1"/>
</dbReference>
<dbReference type="Pfam" id="PF02091">
    <property type="entry name" value="tRNA-synt_2e"/>
    <property type="match status" value="1"/>
</dbReference>
<dbReference type="PRINTS" id="PR01044">
    <property type="entry name" value="TRNASYNTHGA"/>
</dbReference>
<dbReference type="SUPFAM" id="SSF55681">
    <property type="entry name" value="Class II aaRS and biotin synthetases"/>
    <property type="match status" value="1"/>
</dbReference>
<dbReference type="PROSITE" id="PS50861">
    <property type="entry name" value="AA_TRNA_LIGASE_II_GLYAB"/>
    <property type="match status" value="1"/>
</dbReference>